<dbReference type="EMBL" id="CP001047">
    <property type="protein sequence ID" value="ACF07042.1"/>
    <property type="molecule type" value="Genomic_DNA"/>
</dbReference>
<dbReference type="RefSeq" id="WP_012497999.1">
    <property type="nucleotide sequence ID" value="NC_011025.1"/>
</dbReference>
<dbReference type="SMR" id="B3PLZ0"/>
<dbReference type="STRING" id="243272.MARTH_orf096"/>
<dbReference type="KEGG" id="mat:MARTH_orf096"/>
<dbReference type="eggNOG" id="COG0267">
    <property type="taxonomic scope" value="Bacteria"/>
</dbReference>
<dbReference type="HOGENOM" id="CLU_190949_0_1_14"/>
<dbReference type="Proteomes" id="UP000008812">
    <property type="component" value="Chromosome"/>
</dbReference>
<dbReference type="GO" id="GO:0005737">
    <property type="term" value="C:cytoplasm"/>
    <property type="evidence" value="ECO:0007669"/>
    <property type="project" value="UniProtKB-ARBA"/>
</dbReference>
<dbReference type="GO" id="GO:1990904">
    <property type="term" value="C:ribonucleoprotein complex"/>
    <property type="evidence" value="ECO:0007669"/>
    <property type="project" value="UniProtKB-KW"/>
</dbReference>
<dbReference type="GO" id="GO:0005840">
    <property type="term" value="C:ribosome"/>
    <property type="evidence" value="ECO:0007669"/>
    <property type="project" value="UniProtKB-KW"/>
</dbReference>
<dbReference type="GO" id="GO:0003735">
    <property type="term" value="F:structural constituent of ribosome"/>
    <property type="evidence" value="ECO:0007669"/>
    <property type="project" value="InterPro"/>
</dbReference>
<dbReference type="GO" id="GO:0006412">
    <property type="term" value="P:translation"/>
    <property type="evidence" value="ECO:0007669"/>
    <property type="project" value="UniProtKB-UniRule"/>
</dbReference>
<dbReference type="Gene3D" id="2.20.28.120">
    <property type="entry name" value="Ribosomal protein L33"/>
    <property type="match status" value="1"/>
</dbReference>
<dbReference type="HAMAP" id="MF_00294">
    <property type="entry name" value="Ribosomal_bL33"/>
    <property type="match status" value="1"/>
</dbReference>
<dbReference type="InterPro" id="IPR001705">
    <property type="entry name" value="Ribosomal_bL33"/>
</dbReference>
<dbReference type="InterPro" id="IPR038584">
    <property type="entry name" value="Ribosomal_bL33_sf"/>
</dbReference>
<dbReference type="InterPro" id="IPR011332">
    <property type="entry name" value="Ribosomal_zn-bd"/>
</dbReference>
<dbReference type="NCBIfam" id="NF001764">
    <property type="entry name" value="PRK00504.1"/>
    <property type="match status" value="1"/>
</dbReference>
<dbReference type="NCBIfam" id="TIGR01023">
    <property type="entry name" value="rpmG_bact"/>
    <property type="match status" value="1"/>
</dbReference>
<dbReference type="Pfam" id="PF00471">
    <property type="entry name" value="Ribosomal_L33"/>
    <property type="match status" value="1"/>
</dbReference>
<dbReference type="SUPFAM" id="SSF57829">
    <property type="entry name" value="Zn-binding ribosomal proteins"/>
    <property type="match status" value="1"/>
</dbReference>
<organism>
    <name type="scientific">Metamycoplasma arthritidis (strain 158L3-1)</name>
    <name type="common">Mycoplasma arthritidis</name>
    <dbReference type="NCBI Taxonomy" id="243272"/>
    <lineage>
        <taxon>Bacteria</taxon>
        <taxon>Bacillati</taxon>
        <taxon>Mycoplasmatota</taxon>
        <taxon>Mycoplasmoidales</taxon>
        <taxon>Metamycoplasmataceae</taxon>
        <taxon>Metamycoplasma</taxon>
    </lineage>
</organism>
<accession>B3PLZ0</accession>
<evidence type="ECO:0000255" key="1">
    <source>
        <dbReference type="HAMAP-Rule" id="MF_00294"/>
    </source>
</evidence>
<sequence>MKNTKKITLACQVCLAKNYSTNKSVTNRLEIKKFCKHCNMQTLHKEEK</sequence>
<protein>
    <recommendedName>
        <fullName evidence="1">Large ribosomal subunit protein bL33A</fullName>
    </recommendedName>
    <alternativeName>
        <fullName evidence="1">50S ribosomal protein L33 1</fullName>
    </alternativeName>
</protein>
<reference key="1">
    <citation type="journal article" date="2008" name="Infect. Immun.">
        <title>Genome of Mycoplasma arthritidis.</title>
        <authorList>
            <person name="Dybvig K."/>
            <person name="Zuhua C."/>
            <person name="Lao P."/>
            <person name="Jordan D.S."/>
            <person name="French C.T."/>
            <person name="Tu A.H."/>
            <person name="Loraine A.E."/>
        </authorList>
    </citation>
    <scope>NUCLEOTIDE SEQUENCE [LARGE SCALE GENOMIC DNA]</scope>
    <source>
        <strain>158L3-1</strain>
    </source>
</reference>
<proteinExistence type="inferred from homology"/>
<keyword id="KW-1185">Reference proteome</keyword>
<keyword id="KW-0687">Ribonucleoprotein</keyword>
<keyword id="KW-0689">Ribosomal protein</keyword>
<comment type="similarity">
    <text evidence="1">Belongs to the bacterial ribosomal protein bL33 family.</text>
</comment>
<name>RL331_META1</name>
<feature type="chain" id="PRO_0000356571" description="Large ribosomal subunit protein bL33A">
    <location>
        <begin position="1"/>
        <end position="48"/>
    </location>
</feature>
<gene>
    <name evidence="1" type="primary">rpmG1</name>
    <name type="ordered locus">MARTH_orf096</name>
</gene>